<evidence type="ECO:0000250" key="1">
    <source>
        <dbReference type="UniProtKB" id="P62753"/>
    </source>
</evidence>
<evidence type="ECO:0000256" key="2">
    <source>
        <dbReference type="SAM" id="MobiDB-lite"/>
    </source>
</evidence>
<evidence type="ECO:0000305" key="3"/>
<proteinExistence type="evidence at transcript level"/>
<gene>
    <name type="primary">RpS6</name>
</gene>
<reference key="1">
    <citation type="journal article" date="1999" name="Genetica">
        <title>Ribosomal protein S6 cDNA from two Aedes mosquitoes encodes a carboxyl-terminal extension that resembles histone H1 proteins.</title>
        <authorList>
            <person name="Hernandez V.P."/>
            <person name="Fallon A.M."/>
        </authorList>
    </citation>
    <scope>NUCLEOTIDE SEQUENCE [MRNA]</scope>
</reference>
<feature type="chain" id="PRO_0000137322" description="Small ribosomal subunit protein eS6">
    <location>
        <begin position="1"/>
        <end position="349"/>
    </location>
</feature>
<feature type="region of interest" description="Disordered" evidence="2">
    <location>
        <begin position="224"/>
        <end position="349"/>
    </location>
</feature>
<feature type="compositionally biased region" description="Basic and acidic residues" evidence="2">
    <location>
        <begin position="231"/>
        <end position="251"/>
    </location>
</feature>
<feature type="compositionally biased region" description="Basic and acidic residues" evidence="2">
    <location>
        <begin position="260"/>
        <end position="334"/>
    </location>
</feature>
<sequence>MKLNVSFPATGAQKTFEVMDDHKLRHFYDKRMGAEITADHLGDEWKGYVFKIAGGNDKQGFPMKQGVLTNTRVRLLLKKGHSCYRPRRTGERKRKSVRGCIVDQNLSALALIVVKKGEKDIPGLTDTTVLRRLGPKRASNIRKLYNLTKEDDVRQYVVKRPLPEKDGKKPRTKAPKIQRLITPVVLQRKRHRLAIKKRRVESRKEAEAEYMKILHLRRRQERIRRRSRLSSMRDSRSSIGEERDKEKEKAAVKAAKKVAKKEAKKEVKKVTEAAKKADAKAAKAKVEPKKADKKSADSGKKATAGDKKEKKVEKKAAPAAAKKEAPKRKPEAAKGDASAAKKEKKQKKK</sequence>
<accession>Q9U762</accession>
<comment type="function">
    <text evidence="1">Component of the 40S small ribosomal subunit. Plays an important role in controlling cell growth and proliferation through the selective translation of particular classes of mRNA. Part of the small subunit (SSU) processome, first precursor of the small eukaryotic ribosomal subunit. During the assembly of the SSU processome in the nucleolus, many ribosome biogenesis factors, an RNA chaperone and ribosomal proteins associate with the nascent pre-rRNA and work in concert to generate RNA folding, modifications, rearrangements and cleavage as well as targeted degradation of pre-ribosomal RNA by the RNA exosome.</text>
</comment>
<comment type="subunit">
    <text evidence="1">Component of the small ribosomal subunit. Part of the small subunit (SSU) processome, composed of more than 70 proteins and the RNA chaperone small nucleolar RNA (snoRNA) U3.</text>
</comment>
<comment type="subcellular location">
    <subcellularLocation>
        <location evidence="1">Cytoplasm</location>
    </subcellularLocation>
    <subcellularLocation>
        <location evidence="1">Nucleus</location>
        <location evidence="1">Nucleolus</location>
    </subcellularLocation>
</comment>
<comment type="PTM">
    <text evidence="1">Ribosomal protein S6 is the major substrate of protein kinases in eukaryote ribosomes.</text>
</comment>
<comment type="similarity">
    <text evidence="3">Belongs to the eukaryotic ribosomal protein eS6 family.</text>
</comment>
<organism>
    <name type="scientific">Aedes albopictus</name>
    <name type="common">Asian tiger mosquito</name>
    <name type="synonym">Stegomyia albopicta</name>
    <dbReference type="NCBI Taxonomy" id="7160"/>
    <lineage>
        <taxon>Eukaryota</taxon>
        <taxon>Metazoa</taxon>
        <taxon>Ecdysozoa</taxon>
        <taxon>Arthropoda</taxon>
        <taxon>Hexapoda</taxon>
        <taxon>Insecta</taxon>
        <taxon>Pterygota</taxon>
        <taxon>Neoptera</taxon>
        <taxon>Endopterygota</taxon>
        <taxon>Diptera</taxon>
        <taxon>Nematocera</taxon>
        <taxon>Culicoidea</taxon>
        <taxon>Culicidae</taxon>
        <taxon>Culicinae</taxon>
        <taxon>Aedini</taxon>
        <taxon>Aedes</taxon>
        <taxon>Stegomyia</taxon>
    </lineage>
</organism>
<keyword id="KW-0963">Cytoplasm</keyword>
<keyword id="KW-0539">Nucleus</keyword>
<keyword id="KW-0597">Phosphoprotein</keyword>
<keyword id="KW-0687">Ribonucleoprotein</keyword>
<keyword id="KW-0689">Ribosomal protein</keyword>
<name>RS6_AEDAL</name>
<dbReference type="EMBL" id="AF154066">
    <property type="protein sequence ID" value="AAF04789.1"/>
    <property type="molecule type" value="mRNA"/>
</dbReference>
<dbReference type="RefSeq" id="XP_019544926.1">
    <property type="nucleotide sequence ID" value="XM_019689381.1"/>
</dbReference>
<dbReference type="SMR" id="Q9U762"/>
<dbReference type="EnsemblMetazoa" id="AALF004029-RA">
    <property type="protein sequence ID" value="AALF004029-PA"/>
    <property type="gene ID" value="AALF004029"/>
</dbReference>
<dbReference type="GeneID" id="109400853"/>
<dbReference type="KEGG" id="aalb:109400853"/>
<dbReference type="CTD" id="6194"/>
<dbReference type="VEuPathDB" id="VectorBase:AALC636_027940"/>
<dbReference type="VEuPathDB" id="VectorBase:AALC636_032033"/>
<dbReference type="VEuPathDB" id="VectorBase:AALF004029"/>
<dbReference type="VEuPathDB" id="VectorBase:AALFPA_068792"/>
<dbReference type="VEuPathDB" id="VectorBase:AALFPA_076372"/>
<dbReference type="OMA" id="KPRYKAP"/>
<dbReference type="OrthoDB" id="10260596at2759"/>
<dbReference type="Proteomes" id="UP000069940">
    <property type="component" value="Unassembled WGS sequence"/>
</dbReference>
<dbReference type="GO" id="GO:0005737">
    <property type="term" value="C:cytoplasm"/>
    <property type="evidence" value="ECO:0007669"/>
    <property type="project" value="UniProtKB-SubCell"/>
</dbReference>
<dbReference type="GO" id="GO:0005730">
    <property type="term" value="C:nucleolus"/>
    <property type="evidence" value="ECO:0007669"/>
    <property type="project" value="UniProtKB-SubCell"/>
</dbReference>
<dbReference type="GO" id="GO:0005840">
    <property type="term" value="C:ribosome"/>
    <property type="evidence" value="ECO:0007669"/>
    <property type="project" value="UniProtKB-KW"/>
</dbReference>
<dbReference type="GO" id="GO:0032040">
    <property type="term" value="C:small-subunit processome"/>
    <property type="evidence" value="ECO:0000250"/>
    <property type="project" value="UniProtKB"/>
</dbReference>
<dbReference type="GO" id="GO:0003735">
    <property type="term" value="F:structural constituent of ribosome"/>
    <property type="evidence" value="ECO:0007669"/>
    <property type="project" value="InterPro"/>
</dbReference>
<dbReference type="GO" id="GO:0042274">
    <property type="term" value="P:ribosomal small subunit biogenesis"/>
    <property type="evidence" value="ECO:0000250"/>
    <property type="project" value="UniProtKB"/>
</dbReference>
<dbReference type="GO" id="GO:0006412">
    <property type="term" value="P:translation"/>
    <property type="evidence" value="ECO:0007669"/>
    <property type="project" value="InterPro"/>
</dbReference>
<dbReference type="Gene3D" id="1.20.5.2650">
    <property type="match status" value="1"/>
</dbReference>
<dbReference type="InterPro" id="IPR001377">
    <property type="entry name" value="Ribosomal_eS6"/>
</dbReference>
<dbReference type="InterPro" id="IPR018282">
    <property type="entry name" value="Ribosomal_eS6_CS"/>
</dbReference>
<dbReference type="PANTHER" id="PTHR11502">
    <property type="entry name" value="40S RIBOSOMAL PROTEIN S6"/>
    <property type="match status" value="1"/>
</dbReference>
<dbReference type="Pfam" id="PF01092">
    <property type="entry name" value="Ribosomal_S6e"/>
    <property type="match status" value="1"/>
</dbReference>
<dbReference type="SMART" id="SM01405">
    <property type="entry name" value="Ribosomal_S6e"/>
    <property type="match status" value="1"/>
</dbReference>
<dbReference type="PROSITE" id="PS00578">
    <property type="entry name" value="RIBOSOMAL_S6E"/>
    <property type="match status" value="1"/>
</dbReference>
<protein>
    <recommendedName>
        <fullName evidence="3">Small ribosomal subunit protein eS6</fullName>
    </recommendedName>
    <alternativeName>
        <fullName>40S ribosomal protein S6</fullName>
    </alternativeName>
</protein>